<comment type="function">
    <text evidence="1">Core subunit of the mitochondrial membrane respiratory chain NADH dehydrogenase (Complex I) that is believed to belong to the minimal assembly required for catalysis. Complex I functions in the transfer of electrons from NADH to the respiratory chain. The immediate electron acceptor for the enzyme is believed to be ubiquinone (By similarity).</text>
</comment>
<comment type="catalytic activity">
    <reaction>
        <text>a ubiquinone + NADH + 5 H(+)(in) = a ubiquinol + NAD(+) + 4 H(+)(out)</text>
        <dbReference type="Rhea" id="RHEA:29091"/>
        <dbReference type="Rhea" id="RHEA-COMP:9565"/>
        <dbReference type="Rhea" id="RHEA-COMP:9566"/>
        <dbReference type="ChEBI" id="CHEBI:15378"/>
        <dbReference type="ChEBI" id="CHEBI:16389"/>
        <dbReference type="ChEBI" id="CHEBI:17976"/>
        <dbReference type="ChEBI" id="CHEBI:57540"/>
        <dbReference type="ChEBI" id="CHEBI:57945"/>
        <dbReference type="EC" id="7.1.1.2"/>
    </reaction>
</comment>
<comment type="subcellular location">
    <subcellularLocation>
        <location evidence="1">Mitochondrion inner membrane</location>
        <topology evidence="1">Multi-pass membrane protein</topology>
    </subcellularLocation>
</comment>
<comment type="similarity">
    <text evidence="3">Belongs to the complex I subunit 5 family.</text>
</comment>
<gene>
    <name type="primary">ND5</name>
</gene>
<name>NU5M_ANOQU</name>
<sequence length="576" mass="65913">MNYCKISFYFLLSISLSLFLISLKFLLKDLVYFIEWEAWVFKSMSIVMTFLFDWMSLMFMSFVLLISSLVIFYSNQYMEEDYNINRFILLVLMFVMSMMMLIISPNLISILLGWDGLGLVSYCLVIYFQNVKSYNAGMLTALSNRIGDVALLLAIAWMLNYGSWNYIFYLEMMSKNTEMMIIGGLVMLAAMTKSAQIPFSSWLPAAMAAPTPVSALVHSSTLVTAGLYLLIRFNILLTDWWMGQFMLLISGLTMFMAGLGANFEFDLKKIIALSTLSQLGLMMSILSMGFYKLAFFHLLTHALFKALLFMCAGSIIHNMKNSQDIRMMGSLSMSMPLTCSCFNVANLALCGMPFLAGFYSKDLILEMVSLSYVNVFSFFLFFFSTGLTVCYSFRLVYYSMTGDFNSSVLHPLNDSGWTMLFSIFFLMIMAVIGGSMLSWLMFLNPSMICLPFDLKMLTLFVCILGGLIGYLLSNVSLFFTNKALYFYNFTYFAGSMWFMPVVSTIGVINYPLKLGLYSYKSFDQGWSEFFGGQMIYNQLKNYSLYLQEFQMNSLKIYLLSYMLWFIVLLMLVVLVN</sequence>
<evidence type="ECO:0000250" key="1"/>
<evidence type="ECO:0000255" key="2"/>
<evidence type="ECO:0000305" key="3"/>
<dbReference type="EC" id="7.1.1.2"/>
<dbReference type="EMBL" id="L04272">
    <property type="protein sequence ID" value="AAA93547.1"/>
    <property type="molecule type" value="Genomic_DNA"/>
</dbReference>
<dbReference type="SMR" id="P33510"/>
<dbReference type="GO" id="GO:0005743">
    <property type="term" value="C:mitochondrial inner membrane"/>
    <property type="evidence" value="ECO:0007669"/>
    <property type="project" value="UniProtKB-SubCell"/>
</dbReference>
<dbReference type="GO" id="GO:0008137">
    <property type="term" value="F:NADH dehydrogenase (ubiquinone) activity"/>
    <property type="evidence" value="ECO:0007669"/>
    <property type="project" value="UniProtKB-EC"/>
</dbReference>
<dbReference type="GO" id="GO:0042773">
    <property type="term" value="P:ATP synthesis coupled electron transport"/>
    <property type="evidence" value="ECO:0007669"/>
    <property type="project" value="InterPro"/>
</dbReference>
<dbReference type="GO" id="GO:0015990">
    <property type="term" value="P:electron transport coupled proton transport"/>
    <property type="evidence" value="ECO:0007669"/>
    <property type="project" value="TreeGrafter"/>
</dbReference>
<dbReference type="InterPro" id="IPR010934">
    <property type="entry name" value="NADH_DH_su5_C"/>
</dbReference>
<dbReference type="InterPro" id="IPR001750">
    <property type="entry name" value="ND/Mrp_TM"/>
</dbReference>
<dbReference type="InterPro" id="IPR003945">
    <property type="entry name" value="NU5C-like"/>
</dbReference>
<dbReference type="InterPro" id="IPR001516">
    <property type="entry name" value="Proton_antipo_N"/>
</dbReference>
<dbReference type="PANTHER" id="PTHR42829">
    <property type="entry name" value="NADH-UBIQUINONE OXIDOREDUCTASE CHAIN 5"/>
    <property type="match status" value="1"/>
</dbReference>
<dbReference type="PANTHER" id="PTHR42829:SF2">
    <property type="entry name" value="NADH-UBIQUINONE OXIDOREDUCTASE CHAIN 5"/>
    <property type="match status" value="1"/>
</dbReference>
<dbReference type="Pfam" id="PF06455">
    <property type="entry name" value="NADH5_C"/>
    <property type="match status" value="1"/>
</dbReference>
<dbReference type="Pfam" id="PF00361">
    <property type="entry name" value="Proton_antipo_M"/>
    <property type="match status" value="1"/>
</dbReference>
<dbReference type="Pfam" id="PF00662">
    <property type="entry name" value="Proton_antipo_N"/>
    <property type="match status" value="1"/>
</dbReference>
<dbReference type="PRINTS" id="PR01434">
    <property type="entry name" value="NADHDHGNASE5"/>
</dbReference>
<dbReference type="PRINTS" id="PR01435">
    <property type="entry name" value="NPOXDRDTASE5"/>
</dbReference>
<accession>P33510</accession>
<feature type="chain" id="PRO_0000118056" description="NADH-ubiquinone oxidoreductase chain 5">
    <location>
        <begin position="1"/>
        <end position="576"/>
    </location>
</feature>
<feature type="transmembrane region" description="Helical" evidence="2">
    <location>
        <begin position="6"/>
        <end position="26"/>
    </location>
</feature>
<feature type="transmembrane region" description="Helical" evidence="2">
    <location>
        <begin position="46"/>
        <end position="66"/>
    </location>
</feature>
<feature type="transmembrane region" description="Helical" evidence="2">
    <location>
        <begin position="88"/>
        <end position="108"/>
    </location>
</feature>
<feature type="transmembrane region" description="Helical" evidence="2">
    <location>
        <begin position="109"/>
        <end position="129"/>
    </location>
</feature>
<feature type="transmembrane region" description="Helical" evidence="2">
    <location>
        <begin position="149"/>
        <end position="169"/>
    </location>
</feature>
<feature type="transmembrane region" description="Helical" evidence="2">
    <location>
        <begin position="179"/>
        <end position="199"/>
    </location>
</feature>
<feature type="transmembrane region" description="Helical" evidence="2">
    <location>
        <begin position="211"/>
        <end position="231"/>
    </location>
</feature>
<feature type="transmembrane region" description="Helical" evidence="2">
    <location>
        <begin position="240"/>
        <end position="260"/>
    </location>
</feature>
<feature type="transmembrane region" description="Helical" evidence="2">
    <location>
        <begin position="270"/>
        <end position="289"/>
    </location>
</feature>
<feature type="transmembrane region" description="Helical" evidence="2">
    <location>
        <begin position="294"/>
        <end position="316"/>
    </location>
</feature>
<feature type="transmembrane region" description="Helical" evidence="2">
    <location>
        <begin position="339"/>
        <end position="359"/>
    </location>
</feature>
<feature type="transmembrane region" description="Helical" evidence="2">
    <location>
        <begin position="363"/>
        <end position="383"/>
    </location>
</feature>
<feature type="transmembrane region" description="Helical" evidence="2">
    <location>
        <begin position="423"/>
        <end position="443"/>
    </location>
</feature>
<feature type="transmembrane region" description="Helical" evidence="2">
    <location>
        <begin position="459"/>
        <end position="479"/>
    </location>
</feature>
<feature type="transmembrane region" description="Helical" evidence="2">
    <location>
        <begin position="492"/>
        <end position="512"/>
    </location>
</feature>
<feature type="transmembrane region" description="Helical" evidence="2">
    <location>
        <begin position="556"/>
        <end position="576"/>
    </location>
</feature>
<proteinExistence type="inferred from homology"/>
<geneLocation type="mitochondrion"/>
<organism>
    <name type="scientific">Anopheles quadrimaculatus</name>
    <name type="common">Common malaria mosquito</name>
    <dbReference type="NCBI Taxonomy" id="7166"/>
    <lineage>
        <taxon>Eukaryota</taxon>
        <taxon>Metazoa</taxon>
        <taxon>Ecdysozoa</taxon>
        <taxon>Arthropoda</taxon>
        <taxon>Hexapoda</taxon>
        <taxon>Insecta</taxon>
        <taxon>Pterygota</taxon>
        <taxon>Neoptera</taxon>
        <taxon>Endopterygota</taxon>
        <taxon>Diptera</taxon>
        <taxon>Nematocera</taxon>
        <taxon>Culicoidea</taxon>
        <taxon>Culicidae</taxon>
        <taxon>Anophelinae</taxon>
        <taxon>Anopheles</taxon>
    </lineage>
</organism>
<keyword id="KW-0249">Electron transport</keyword>
<keyword id="KW-0472">Membrane</keyword>
<keyword id="KW-0496">Mitochondrion</keyword>
<keyword id="KW-0999">Mitochondrion inner membrane</keyword>
<keyword id="KW-0520">NAD</keyword>
<keyword id="KW-0679">Respiratory chain</keyword>
<keyword id="KW-1278">Translocase</keyword>
<keyword id="KW-0812">Transmembrane</keyword>
<keyword id="KW-1133">Transmembrane helix</keyword>
<keyword id="KW-0813">Transport</keyword>
<keyword id="KW-0830">Ubiquinone</keyword>
<protein>
    <recommendedName>
        <fullName>NADH-ubiquinone oxidoreductase chain 5</fullName>
        <ecNumber>7.1.1.2</ecNumber>
    </recommendedName>
    <alternativeName>
        <fullName>NADH dehydrogenase subunit 5</fullName>
    </alternativeName>
</protein>
<reference key="1">
    <citation type="journal article" date="1990" name="Arch. Insect Biochem. Physiol.">
        <title>Cloning of the mitochondrial genome of Anopheles quadrimaculatus.</title>
        <authorList>
            <person name="Cockburn A.F."/>
            <person name="Mitchell S.E."/>
            <person name="Seawright J.A."/>
        </authorList>
    </citation>
    <scope>NUCLEOTIDE SEQUENCE [GENOMIC DNA]</scope>
    <source>
        <strain>Orlando</strain>
    </source>
</reference>